<feature type="chain" id="PRO_0000367168" description="UPF0173 metal-dependent hydrolase BOV_A0561">
    <location>
        <begin position="1"/>
        <end position="237"/>
    </location>
</feature>
<name>Y2761_BRUO2</name>
<proteinExistence type="inferred from homology"/>
<reference key="1">
    <citation type="journal article" date="2009" name="PLoS ONE">
        <title>Genome degradation in Brucella ovis corresponds with narrowing of its host range and tissue tropism.</title>
        <authorList>
            <person name="Tsolis R.M."/>
            <person name="Seshadri R."/>
            <person name="Santos R.L."/>
            <person name="Sangari F.J."/>
            <person name="Lobo J.M."/>
            <person name="de Jong M.F."/>
            <person name="Ren Q."/>
            <person name="Myers G."/>
            <person name="Brinkac L.M."/>
            <person name="Nelson W.C."/>
            <person name="Deboy R.T."/>
            <person name="Angiuoli S."/>
            <person name="Khouri H."/>
            <person name="Dimitrov G."/>
            <person name="Robinson J.R."/>
            <person name="Mulligan S."/>
            <person name="Walker R.L."/>
            <person name="Elzer P.E."/>
            <person name="Hassan K.A."/>
            <person name="Paulsen I.T."/>
        </authorList>
    </citation>
    <scope>NUCLEOTIDE SEQUENCE [LARGE SCALE GENOMIC DNA]</scope>
    <source>
        <strain>ATCC 25840 / 63/290 / NCTC 10512</strain>
    </source>
</reference>
<sequence>MKITWLGHAAFRVETAKAVILIDPFLNGNPGAKGIDFKEATRGVTHIALTHGHGDHVGDTVAIAREHGATVIANADLASWLGSQGVEKLDPGNTGGTLAHEGFTITFVNALHSSAMLTENGVSQALGNPNGLVFHFEDSPTLYHMGDTDIFSDMAFINELHQPEIGIVPIGDRFTMGGAVAALACQRYFNFNSVLPCHYASFPIIDRTADKFIAGMADHPATKVLADPAGTVHSFQA</sequence>
<comment type="similarity">
    <text evidence="1">Belongs to the UPF0173 family.</text>
</comment>
<protein>
    <recommendedName>
        <fullName evidence="1">UPF0173 metal-dependent hydrolase BOV_A0561</fullName>
    </recommendedName>
</protein>
<evidence type="ECO:0000255" key="1">
    <source>
        <dbReference type="HAMAP-Rule" id="MF_00457"/>
    </source>
</evidence>
<accession>A5VUS8</accession>
<organism>
    <name type="scientific">Brucella ovis (strain ATCC 25840 / 63/290 / NCTC 10512)</name>
    <dbReference type="NCBI Taxonomy" id="444178"/>
    <lineage>
        <taxon>Bacteria</taxon>
        <taxon>Pseudomonadati</taxon>
        <taxon>Pseudomonadota</taxon>
        <taxon>Alphaproteobacteria</taxon>
        <taxon>Hyphomicrobiales</taxon>
        <taxon>Brucellaceae</taxon>
        <taxon>Brucella/Ochrobactrum group</taxon>
        <taxon>Brucella</taxon>
    </lineage>
</organism>
<gene>
    <name type="ordered locus">BOV_A0561</name>
</gene>
<keyword id="KW-0378">Hydrolase</keyword>
<dbReference type="EMBL" id="CP000709">
    <property type="protein sequence ID" value="ABQ62691.1"/>
    <property type="molecule type" value="Genomic_DNA"/>
</dbReference>
<dbReference type="RefSeq" id="WP_006016120.1">
    <property type="nucleotide sequence ID" value="NC_009504.1"/>
</dbReference>
<dbReference type="SMR" id="A5VUS8"/>
<dbReference type="GeneID" id="45125946"/>
<dbReference type="KEGG" id="bov:BOV_A0561"/>
<dbReference type="HOGENOM" id="CLU_070010_4_0_5"/>
<dbReference type="PhylomeDB" id="A5VUS8"/>
<dbReference type="Proteomes" id="UP000006383">
    <property type="component" value="Chromosome II"/>
</dbReference>
<dbReference type="GO" id="GO:0016787">
    <property type="term" value="F:hydrolase activity"/>
    <property type="evidence" value="ECO:0007669"/>
    <property type="project" value="UniProtKB-UniRule"/>
</dbReference>
<dbReference type="CDD" id="cd06262">
    <property type="entry name" value="metallo-hydrolase-like_MBL-fold"/>
    <property type="match status" value="1"/>
</dbReference>
<dbReference type="Gene3D" id="3.60.15.10">
    <property type="entry name" value="Ribonuclease Z/Hydroxyacylglutathione hydrolase-like"/>
    <property type="match status" value="1"/>
</dbReference>
<dbReference type="HAMAP" id="MF_00457">
    <property type="entry name" value="UPF0173"/>
    <property type="match status" value="1"/>
</dbReference>
<dbReference type="InterPro" id="IPR001279">
    <property type="entry name" value="Metallo-B-lactamas"/>
</dbReference>
<dbReference type="InterPro" id="IPR036866">
    <property type="entry name" value="RibonucZ/Hydroxyglut_hydro"/>
</dbReference>
<dbReference type="InterPro" id="IPR022877">
    <property type="entry name" value="UPF0173"/>
</dbReference>
<dbReference type="InterPro" id="IPR050114">
    <property type="entry name" value="UPF0173_UPF0282_UlaG_hydrolase"/>
</dbReference>
<dbReference type="NCBIfam" id="NF001911">
    <property type="entry name" value="PRK00685.1"/>
    <property type="match status" value="1"/>
</dbReference>
<dbReference type="PANTHER" id="PTHR43546:SF3">
    <property type="entry name" value="UPF0173 METAL-DEPENDENT HYDROLASE MJ1163"/>
    <property type="match status" value="1"/>
</dbReference>
<dbReference type="PANTHER" id="PTHR43546">
    <property type="entry name" value="UPF0173 METAL-DEPENDENT HYDROLASE MJ1163-RELATED"/>
    <property type="match status" value="1"/>
</dbReference>
<dbReference type="Pfam" id="PF13483">
    <property type="entry name" value="Lactamase_B_3"/>
    <property type="match status" value="1"/>
</dbReference>
<dbReference type="SMART" id="SM00849">
    <property type="entry name" value="Lactamase_B"/>
    <property type="match status" value="1"/>
</dbReference>
<dbReference type="SUPFAM" id="SSF56281">
    <property type="entry name" value="Metallo-hydrolase/oxidoreductase"/>
    <property type="match status" value="1"/>
</dbReference>